<gene>
    <name type="primary">OPG112</name>
    <name type="ORF">H7R</name>
</gene>
<organismHost>
    <name type="scientific">Homo sapiens</name>
    <name type="common">Human</name>
    <dbReference type="NCBI Taxonomy" id="9606"/>
</organismHost>
<proteinExistence type="evidence at transcript level"/>
<protein>
    <recommendedName>
        <fullName>Late protein OPG112</fullName>
    </recommendedName>
</protein>
<accession>P20539</accession>
<reference key="1">
    <citation type="journal article" date="1990" name="Virology">
        <title>The complete DNA sequence of vaccinia virus.</title>
        <authorList>
            <person name="Goebel S.J."/>
            <person name="Johnson G.P."/>
            <person name="Perkus M.E."/>
            <person name="Davis S.W."/>
            <person name="Winslow J.P."/>
            <person name="Paoletti E."/>
        </authorList>
    </citation>
    <scope>NUCLEOTIDE SEQUENCE [LARGE SCALE GENOMIC DNA]</scope>
</reference>
<reference key="2">
    <citation type="journal article" date="1990" name="Virology">
        <title>Appendix to 'The complete DNA sequence of vaccinia virus'.</title>
        <authorList>
            <person name="Goebel S.J."/>
            <person name="Johnson G.P."/>
            <person name="Perkus M.E."/>
            <person name="Davis S.W."/>
            <person name="Winslow J.P."/>
            <person name="Paoletti E."/>
        </authorList>
    </citation>
    <scope>NUCLEOTIDE SEQUENCE [LARGE SCALE GENOMIC DNA]</scope>
</reference>
<evidence type="ECO:0000250" key="1">
    <source>
        <dbReference type="UniProtKB" id="P08586"/>
    </source>
</evidence>
<evidence type="ECO:0000255" key="2"/>
<evidence type="ECO:0000305" key="3"/>
<comment type="function">
    <text evidence="1">Contributes to the formation of crescents and immature virions (IV). Interacts with phosphatidylinositol-3-phosphate (PI3P) and phosphatidylinositol-4-phosphate (PI4P) lipids in order to form virion membranes. Mechanistically, mediates proper formation of OPG125-hexamers, and hence the honey comb lattice and spherical immature virus.</text>
</comment>
<comment type="subcellular location">
    <subcellularLocation>
        <location evidence="1">Host membrane</location>
        <topology evidence="1">Single-pass membrane protein</topology>
    </subcellularLocation>
    <subcellularLocation>
        <location evidence="1">Host cytoplasm</location>
    </subcellularLocation>
    <text evidence="1">Probably transitorily part of the membrane of crescents during immature virions formation. Not incorporated into virions. Probably synthesized, but not retained in viral factories.</text>
</comment>
<comment type="induction">
    <text>Expressed in the late phase of the viral replicative cycle.</text>
</comment>
<comment type="similarity">
    <text evidence="3">Belongs to the orthopoxvirus OPG112 family.</text>
</comment>
<dbReference type="EMBL" id="M35027">
    <property type="protein sequence ID" value="AAA48094.1"/>
    <property type="molecule type" value="Genomic_DNA"/>
</dbReference>
<dbReference type="PIR" id="G42514">
    <property type="entry name" value="QQVZ28"/>
</dbReference>
<dbReference type="SMR" id="P20539"/>
<dbReference type="Proteomes" id="UP000008269">
    <property type="component" value="Segment"/>
</dbReference>
<dbReference type="GO" id="GO:0030430">
    <property type="term" value="C:host cell cytoplasm"/>
    <property type="evidence" value="ECO:0007669"/>
    <property type="project" value="UniProtKB-SubCell"/>
</dbReference>
<dbReference type="GO" id="GO:0033644">
    <property type="term" value="C:host cell membrane"/>
    <property type="evidence" value="ECO:0007669"/>
    <property type="project" value="UniProtKB-SubCell"/>
</dbReference>
<dbReference type="GO" id="GO:0016020">
    <property type="term" value="C:membrane"/>
    <property type="evidence" value="ECO:0007669"/>
    <property type="project" value="UniProtKB-KW"/>
</dbReference>
<dbReference type="InterPro" id="IPR006872">
    <property type="entry name" value="Poxvirus_H7"/>
</dbReference>
<dbReference type="Pfam" id="PF04787">
    <property type="entry name" value="Pox_H7"/>
    <property type="match status" value="1"/>
</dbReference>
<name>PG112_VACCC</name>
<organism>
    <name type="scientific">Vaccinia virus (strain Copenhagen)</name>
    <name type="common">VACV</name>
    <dbReference type="NCBI Taxonomy" id="10249"/>
    <lineage>
        <taxon>Viruses</taxon>
        <taxon>Varidnaviria</taxon>
        <taxon>Bamfordvirae</taxon>
        <taxon>Nucleocytoviricota</taxon>
        <taxon>Pokkesviricetes</taxon>
        <taxon>Chitovirales</taxon>
        <taxon>Poxviridae</taxon>
        <taxon>Chordopoxvirinae</taxon>
        <taxon>Orthopoxvirus</taxon>
        <taxon>Vaccinia virus</taxon>
    </lineage>
</organism>
<feature type="chain" id="PRO_0000099551" description="Late protein OPG112">
    <location>
        <begin position="1"/>
        <end position="146"/>
    </location>
</feature>
<feature type="transmembrane region" description="Helical" evidence="2">
    <location>
        <begin position="10"/>
        <end position="32"/>
    </location>
</feature>
<sequence>MEMDKRIKSLAMTAFFGELNTLDIMALIMSIFKRHPNNTIFSVDKDGQFMIDFEYDNYKASQYLDLTLTPISGDECKTHASSIAEQLACADIIKEDISEYIKTTPRLKRFIKKYRNRSDTRISRDTEKLKIALAKGIDYEYIKDAC</sequence>
<keyword id="KW-1035">Host cytoplasm</keyword>
<keyword id="KW-1043">Host membrane</keyword>
<keyword id="KW-0426">Late protein</keyword>
<keyword id="KW-0472">Membrane</keyword>
<keyword id="KW-1185">Reference proteome</keyword>
<keyword id="KW-0812">Transmembrane</keyword>
<keyword id="KW-1133">Transmembrane helix</keyword>